<sequence>MKNLYSLRRFYHVETLFNGSLVVGGRDQESTGFAWWAGNARLINLSGKLLGAHVAHAGLIVFWAGAMNLFEVAHFVPEKPMYEQGLILLPHLATLGYGVGPGGEVIDTYPYFVSGVLHLISSAVLGFGGVYHSLVGPETLEESFPFFGYVWKDKNKMTTILGIHLIVLGFGAWLLVWKAMYFGGIYDTWAPGGGDVRIISNPTVSPGVIFSYILKSPFGGDGWIVSVDNMEDVIGGHIWIGTLCIFGGIWHILTKPWAWARRAFVWSGEAYLSYSLGAIALMGFTACCMSWFNTTAYPSEFYGPTGPEASQSQTFTFLVRDQRLGANVASAQGPTGLGKYLMRSPTGEIIFGGETMRFWDFRGPWLEPLRGPNGLDLNKLKNDIQPWQERRAAEYMTHAPLGSLNSVGGVATEINAVNYVSPRSWLATSHFCLGFFFFVGHLWHAGRARAAAAGFEKGIDRDNEPVLSMRPLD</sequence>
<proteinExistence type="inferred from homology"/>
<organism>
    <name type="scientific">Chlorella vulgaris</name>
    <name type="common">Green alga</name>
    <dbReference type="NCBI Taxonomy" id="3077"/>
    <lineage>
        <taxon>Eukaryota</taxon>
        <taxon>Viridiplantae</taxon>
        <taxon>Chlorophyta</taxon>
        <taxon>core chlorophytes</taxon>
        <taxon>Trebouxiophyceae</taxon>
        <taxon>Chlorellales</taxon>
        <taxon>Chlorellaceae</taxon>
        <taxon>Chlorella clade</taxon>
        <taxon>Chlorella</taxon>
    </lineage>
</organism>
<evidence type="ECO:0000255" key="1">
    <source>
        <dbReference type="HAMAP-Rule" id="MF_01496"/>
    </source>
</evidence>
<reference key="1">
    <citation type="journal article" date="1997" name="Proc. Natl. Acad. Sci. U.S.A.">
        <title>Complete nucleotide sequence of the chloroplast genome from the green alga Chlorella vulgaris: the existence of genes possibly involved in chloroplast division.</title>
        <authorList>
            <person name="Wakasugi T."/>
            <person name="Nagai T."/>
            <person name="Kapoor M."/>
            <person name="Sugita M."/>
            <person name="Ito M."/>
            <person name="Ito S."/>
            <person name="Tsudzuki J."/>
            <person name="Nakashima K."/>
            <person name="Tsudzuki T."/>
            <person name="Suzuki Y."/>
            <person name="Hamada A."/>
            <person name="Ohta T."/>
            <person name="Inamura A."/>
            <person name="Yoshinaga K."/>
            <person name="Sugiura M."/>
        </authorList>
    </citation>
    <scope>NUCLEOTIDE SEQUENCE [LARGE SCALE GENOMIC DNA]</scope>
    <source>
        <strain>IAM C-27 / Tamiya</strain>
    </source>
</reference>
<keyword id="KW-0007">Acetylation</keyword>
<keyword id="KW-0148">Chlorophyll</keyword>
<keyword id="KW-0150">Chloroplast</keyword>
<keyword id="KW-0157">Chromophore</keyword>
<keyword id="KW-0464">Manganese</keyword>
<keyword id="KW-0472">Membrane</keyword>
<keyword id="KW-0479">Metal-binding</keyword>
<keyword id="KW-0597">Phosphoprotein</keyword>
<keyword id="KW-0602">Photosynthesis</keyword>
<keyword id="KW-0604">Photosystem II</keyword>
<keyword id="KW-0934">Plastid</keyword>
<keyword id="KW-0793">Thylakoid</keyword>
<keyword id="KW-0812">Transmembrane</keyword>
<keyword id="KW-1133">Transmembrane helix</keyword>
<dbReference type="EMBL" id="AB001684">
    <property type="protein sequence ID" value="BAA57875.1"/>
    <property type="molecule type" value="Genomic_DNA"/>
</dbReference>
<dbReference type="PIR" id="T07228">
    <property type="entry name" value="T07228"/>
</dbReference>
<dbReference type="RefSeq" id="NP_045800.2">
    <property type="nucleotide sequence ID" value="NC_001865.1"/>
</dbReference>
<dbReference type="SMR" id="P56308"/>
<dbReference type="GeneID" id="809108"/>
<dbReference type="GO" id="GO:0009535">
    <property type="term" value="C:chloroplast thylakoid membrane"/>
    <property type="evidence" value="ECO:0007669"/>
    <property type="project" value="UniProtKB-SubCell"/>
</dbReference>
<dbReference type="GO" id="GO:0009523">
    <property type="term" value="C:photosystem II"/>
    <property type="evidence" value="ECO:0007669"/>
    <property type="project" value="UniProtKB-KW"/>
</dbReference>
<dbReference type="GO" id="GO:0016168">
    <property type="term" value="F:chlorophyll binding"/>
    <property type="evidence" value="ECO:0007669"/>
    <property type="project" value="UniProtKB-UniRule"/>
</dbReference>
<dbReference type="GO" id="GO:0045156">
    <property type="term" value="F:electron transporter, transferring electrons within the cyclic electron transport pathway of photosynthesis activity"/>
    <property type="evidence" value="ECO:0007669"/>
    <property type="project" value="InterPro"/>
</dbReference>
<dbReference type="GO" id="GO:0046872">
    <property type="term" value="F:metal ion binding"/>
    <property type="evidence" value="ECO:0007669"/>
    <property type="project" value="UniProtKB-KW"/>
</dbReference>
<dbReference type="GO" id="GO:0009772">
    <property type="term" value="P:photosynthetic electron transport in photosystem II"/>
    <property type="evidence" value="ECO:0007669"/>
    <property type="project" value="InterPro"/>
</dbReference>
<dbReference type="FunFam" id="1.10.10.670:FF:000001">
    <property type="entry name" value="Photosystem II CP43 reaction center protein"/>
    <property type="match status" value="1"/>
</dbReference>
<dbReference type="Gene3D" id="1.10.10.670">
    <property type="entry name" value="photosystem ii from thermosynechococcus elongatus"/>
    <property type="match status" value="1"/>
</dbReference>
<dbReference type="HAMAP" id="MF_01496">
    <property type="entry name" value="PSII_PsbC_CP43"/>
    <property type="match status" value="1"/>
</dbReference>
<dbReference type="InterPro" id="IPR000932">
    <property type="entry name" value="PS_antenna-like"/>
</dbReference>
<dbReference type="InterPro" id="IPR036001">
    <property type="entry name" value="PS_II_antenna-like_sf"/>
</dbReference>
<dbReference type="InterPro" id="IPR005869">
    <property type="entry name" value="PSII_PsbC"/>
</dbReference>
<dbReference type="InterPro" id="IPR044900">
    <property type="entry name" value="PSII_PsbC_sf"/>
</dbReference>
<dbReference type="NCBIfam" id="TIGR01153">
    <property type="entry name" value="psbC"/>
    <property type="match status" value="1"/>
</dbReference>
<dbReference type="Pfam" id="PF00421">
    <property type="entry name" value="PSII"/>
    <property type="match status" value="1"/>
</dbReference>
<dbReference type="SUPFAM" id="SSF161077">
    <property type="entry name" value="Photosystem II antenna protein-like"/>
    <property type="match status" value="1"/>
</dbReference>
<comment type="function">
    <text evidence="1">One of the components of the core complex of photosystem II (PSII). It binds chlorophyll and helps catalyze the primary light-induced photochemical processes of PSII. PSII is a light-driven water:plastoquinone oxidoreductase, using light energy to abstract electrons from H(2)O, generating O(2) and a proton gradient subsequently used for ATP formation.</text>
</comment>
<comment type="cofactor">
    <text evidence="1">Binds multiple chlorophylls and provides some of the ligands for the Ca-4Mn-5O cluster of the oxygen-evolving complex. It may also provide a ligand for a Cl- that is required for oxygen evolution. PSII binds additional chlorophylls, carotenoids and specific lipids.</text>
</comment>
<comment type="subunit">
    <text evidence="1">PSII is composed of 1 copy each of membrane proteins PsbA, PsbB, PsbC, PsbD, PsbE, PsbF, PsbH, PsbI, PsbJ, PsbK, PsbL, PsbM, PsbT, PsbX, PsbY, PsbZ, Psb30/Ycf12, at least 3 peripheral proteins of the oxygen-evolving complex and a large number of cofactors. It forms dimeric complexes.</text>
</comment>
<comment type="subcellular location">
    <subcellularLocation>
        <location evidence="1">Plastid</location>
        <location evidence="1">Chloroplast thylakoid membrane</location>
        <topology evidence="1">Multi-pass membrane protein</topology>
    </subcellularLocation>
</comment>
<comment type="similarity">
    <text evidence="1">Belongs to the PsbB/PsbC family. PsbC subfamily.</text>
</comment>
<accession>P56308</accession>
<feature type="propeptide" id="PRO_0000431126" evidence="1">
    <location>
        <begin position="1"/>
        <end position="14"/>
    </location>
</feature>
<feature type="chain" id="PRO_0000077510" description="Photosystem II CP43 reaction center protein" evidence="1">
    <location>
        <begin position="15"/>
        <end position="473"/>
    </location>
</feature>
<feature type="transmembrane region" description="Helical" evidence="1">
    <location>
        <begin position="69"/>
        <end position="93"/>
    </location>
</feature>
<feature type="transmembrane region" description="Helical" evidence="1">
    <location>
        <begin position="134"/>
        <end position="155"/>
    </location>
</feature>
<feature type="transmembrane region" description="Helical" evidence="1">
    <location>
        <begin position="178"/>
        <end position="200"/>
    </location>
</feature>
<feature type="transmembrane region" description="Helical" evidence="1">
    <location>
        <begin position="255"/>
        <end position="275"/>
    </location>
</feature>
<feature type="transmembrane region" description="Helical" evidence="1">
    <location>
        <begin position="291"/>
        <end position="312"/>
    </location>
</feature>
<feature type="transmembrane region" description="Helical" evidence="1">
    <location>
        <begin position="447"/>
        <end position="471"/>
    </location>
</feature>
<feature type="binding site" evidence="1">
    <location>
        <position position="367"/>
    </location>
    <ligand>
        <name>[CaMn4O5] cluster</name>
        <dbReference type="ChEBI" id="CHEBI:189552"/>
    </ligand>
</feature>
<feature type="modified residue" description="N-acetylthreonine" evidence="1">
    <location>
        <position position="15"/>
    </location>
</feature>
<feature type="modified residue" description="Phosphothreonine" evidence="1">
    <location>
        <position position="15"/>
    </location>
</feature>
<name>PSBC_CHLVU</name>
<protein>
    <recommendedName>
        <fullName evidence="1">Photosystem II CP43 reaction center protein</fullName>
    </recommendedName>
    <alternativeName>
        <fullName evidence="1">PSII 43 kDa protein</fullName>
    </alternativeName>
    <alternativeName>
        <fullName evidence="1">Protein CP-43</fullName>
    </alternativeName>
</protein>
<gene>
    <name evidence="1" type="primary">psbC</name>
</gene>
<geneLocation type="chloroplast"/>